<sequence>MKKSLLGLTFASLMFSAGSAVAADYKIDKEGQHAFVNFRIQHLGYSWLYGTFKDFDGTFTFDEKNPAADKVNVTINTTSVDTNHAERDKHLRSADFLNTAKYPQATFTSTSVKKDGDELDITGDLTLNGVTKPVTLEAKLIGQGDDPWGGKRAGFEAEGKIKLKDFNIKTDLGPASQEVDLIISVEGVQQK</sequence>
<evidence type="ECO:0000250" key="1"/>
<evidence type="ECO:0000305" key="2"/>
<dbReference type="EMBL" id="AE005174">
    <property type="protein sequence ID" value="AAG55802.1"/>
    <property type="molecule type" value="Genomic_DNA"/>
</dbReference>
<dbReference type="EMBL" id="BA000007">
    <property type="protein sequence ID" value="BAB34857.1"/>
    <property type="molecule type" value="Genomic_DNA"/>
</dbReference>
<dbReference type="PIR" id="B90808">
    <property type="entry name" value="B90808"/>
</dbReference>
<dbReference type="PIR" id="F85667">
    <property type="entry name" value="F85667"/>
</dbReference>
<dbReference type="RefSeq" id="NP_309461.1">
    <property type="nucleotide sequence ID" value="NC_002695.1"/>
</dbReference>
<dbReference type="RefSeq" id="WP_000749261.1">
    <property type="nucleotide sequence ID" value="NZ_VOAI01000018.1"/>
</dbReference>
<dbReference type="SMR" id="P0A8X3"/>
<dbReference type="STRING" id="155864.Z1692"/>
<dbReference type="GeneID" id="912645"/>
<dbReference type="KEGG" id="ece:Z1692"/>
<dbReference type="KEGG" id="ecs:ECs_1434"/>
<dbReference type="PATRIC" id="fig|386585.9.peg.1535"/>
<dbReference type="eggNOG" id="COG2353">
    <property type="taxonomic scope" value="Bacteria"/>
</dbReference>
<dbReference type="HOGENOM" id="CLU_071003_1_2_6"/>
<dbReference type="OMA" id="IDKQGQH"/>
<dbReference type="Proteomes" id="UP000000558">
    <property type="component" value="Chromosome"/>
</dbReference>
<dbReference type="Proteomes" id="UP000002519">
    <property type="component" value="Chromosome"/>
</dbReference>
<dbReference type="GO" id="GO:0042597">
    <property type="term" value="C:periplasmic space"/>
    <property type="evidence" value="ECO:0007669"/>
    <property type="project" value="UniProtKB-SubCell"/>
</dbReference>
<dbReference type="Gene3D" id="2.40.128.110">
    <property type="entry name" value="Lipid/polyisoprenoid-binding, YceI-like"/>
    <property type="match status" value="1"/>
</dbReference>
<dbReference type="HAMAP" id="MF_00780">
    <property type="entry name" value="UPF0312"/>
    <property type="match status" value="1"/>
</dbReference>
<dbReference type="InterPro" id="IPR007372">
    <property type="entry name" value="Lipid/polyisoprenoid-bd_YceI"/>
</dbReference>
<dbReference type="InterPro" id="IPR036761">
    <property type="entry name" value="TTHA0802/YceI-like_sf"/>
</dbReference>
<dbReference type="InterPro" id="IPR023480">
    <property type="entry name" value="UPF0312/YceI"/>
</dbReference>
<dbReference type="NCBIfam" id="NF002994">
    <property type="entry name" value="PRK03757.1"/>
    <property type="match status" value="1"/>
</dbReference>
<dbReference type="PANTHER" id="PTHR34406">
    <property type="entry name" value="PROTEIN YCEI"/>
    <property type="match status" value="1"/>
</dbReference>
<dbReference type="PANTHER" id="PTHR34406:SF1">
    <property type="entry name" value="PROTEIN YCEI"/>
    <property type="match status" value="1"/>
</dbReference>
<dbReference type="Pfam" id="PF04264">
    <property type="entry name" value="YceI"/>
    <property type="match status" value="1"/>
</dbReference>
<dbReference type="SMART" id="SM00867">
    <property type="entry name" value="YceI"/>
    <property type="match status" value="1"/>
</dbReference>
<dbReference type="SUPFAM" id="SSF101874">
    <property type="entry name" value="YceI-like"/>
    <property type="match status" value="1"/>
</dbReference>
<name>YCEI_ECO57</name>
<feature type="signal peptide" evidence="1">
    <location>
        <begin position="1"/>
        <end position="22"/>
    </location>
</feature>
<feature type="chain" id="PRO_0000036277" description="Protein YceI">
    <location>
        <begin position="23"/>
        <end position="191"/>
    </location>
</feature>
<comment type="subcellular location">
    <subcellularLocation>
        <location evidence="2">Periplasm</location>
    </subcellularLocation>
</comment>
<comment type="similarity">
    <text evidence="2">Belongs to the UPF0312 family. Type 1 subfamily.</text>
</comment>
<protein>
    <recommendedName>
        <fullName>Protein YceI</fullName>
    </recommendedName>
</protein>
<organism>
    <name type="scientific">Escherichia coli O157:H7</name>
    <dbReference type="NCBI Taxonomy" id="83334"/>
    <lineage>
        <taxon>Bacteria</taxon>
        <taxon>Pseudomonadati</taxon>
        <taxon>Pseudomonadota</taxon>
        <taxon>Gammaproteobacteria</taxon>
        <taxon>Enterobacterales</taxon>
        <taxon>Enterobacteriaceae</taxon>
        <taxon>Escherichia</taxon>
    </lineage>
</organism>
<gene>
    <name type="primary">yceI</name>
    <name type="ordered locus">Z1692</name>
    <name type="ordered locus">ECs1434</name>
</gene>
<proteinExistence type="inferred from homology"/>
<accession>P0A8X3</accession>
<accession>P37904</accession>
<keyword id="KW-0574">Periplasm</keyword>
<keyword id="KW-1185">Reference proteome</keyword>
<keyword id="KW-0732">Signal</keyword>
<reference key="1">
    <citation type="journal article" date="2001" name="Nature">
        <title>Genome sequence of enterohaemorrhagic Escherichia coli O157:H7.</title>
        <authorList>
            <person name="Perna N.T."/>
            <person name="Plunkett G. III"/>
            <person name="Burland V."/>
            <person name="Mau B."/>
            <person name="Glasner J.D."/>
            <person name="Rose D.J."/>
            <person name="Mayhew G.F."/>
            <person name="Evans P.S."/>
            <person name="Gregor J."/>
            <person name="Kirkpatrick H.A."/>
            <person name="Posfai G."/>
            <person name="Hackett J."/>
            <person name="Klink S."/>
            <person name="Boutin A."/>
            <person name="Shao Y."/>
            <person name="Miller L."/>
            <person name="Grotbeck E.J."/>
            <person name="Davis N.W."/>
            <person name="Lim A."/>
            <person name="Dimalanta E.T."/>
            <person name="Potamousis K."/>
            <person name="Apodaca J."/>
            <person name="Anantharaman T.S."/>
            <person name="Lin J."/>
            <person name="Yen G."/>
            <person name="Schwartz D.C."/>
            <person name="Welch R.A."/>
            <person name="Blattner F.R."/>
        </authorList>
    </citation>
    <scope>NUCLEOTIDE SEQUENCE [LARGE SCALE GENOMIC DNA]</scope>
    <source>
        <strain>O157:H7 / EDL933 / ATCC 700927 / EHEC</strain>
    </source>
</reference>
<reference key="2">
    <citation type="journal article" date="2001" name="DNA Res.">
        <title>Complete genome sequence of enterohemorrhagic Escherichia coli O157:H7 and genomic comparison with a laboratory strain K-12.</title>
        <authorList>
            <person name="Hayashi T."/>
            <person name="Makino K."/>
            <person name="Ohnishi M."/>
            <person name="Kurokawa K."/>
            <person name="Ishii K."/>
            <person name="Yokoyama K."/>
            <person name="Han C.-G."/>
            <person name="Ohtsubo E."/>
            <person name="Nakayama K."/>
            <person name="Murata T."/>
            <person name="Tanaka M."/>
            <person name="Tobe T."/>
            <person name="Iida T."/>
            <person name="Takami H."/>
            <person name="Honda T."/>
            <person name="Sasakawa C."/>
            <person name="Ogasawara N."/>
            <person name="Yasunaga T."/>
            <person name="Kuhara S."/>
            <person name="Shiba T."/>
            <person name="Hattori M."/>
            <person name="Shinagawa H."/>
        </authorList>
    </citation>
    <scope>NUCLEOTIDE SEQUENCE [LARGE SCALE GENOMIC DNA]</scope>
    <source>
        <strain>O157:H7 / Sakai / RIMD 0509952 / EHEC</strain>
    </source>
</reference>